<reference key="1">
    <citation type="submission" date="2006-12" db="EMBL/GenBank/DDBJ databases">
        <title>Complete sequence of Shewanella sp. W3-18-1.</title>
        <authorList>
            <consortium name="US DOE Joint Genome Institute"/>
            <person name="Copeland A."/>
            <person name="Lucas S."/>
            <person name="Lapidus A."/>
            <person name="Barry K."/>
            <person name="Detter J.C."/>
            <person name="Glavina del Rio T."/>
            <person name="Hammon N."/>
            <person name="Israni S."/>
            <person name="Dalin E."/>
            <person name="Tice H."/>
            <person name="Pitluck S."/>
            <person name="Chain P."/>
            <person name="Malfatti S."/>
            <person name="Shin M."/>
            <person name="Vergez L."/>
            <person name="Schmutz J."/>
            <person name="Larimer F."/>
            <person name="Land M."/>
            <person name="Hauser L."/>
            <person name="Kyrpides N."/>
            <person name="Lykidis A."/>
            <person name="Tiedje J."/>
            <person name="Richardson P."/>
        </authorList>
    </citation>
    <scope>NUCLEOTIDE SEQUENCE [LARGE SCALE GENOMIC DNA]</scope>
    <source>
        <strain>W3-18-1</strain>
    </source>
</reference>
<organism>
    <name type="scientific">Shewanella sp. (strain W3-18-1)</name>
    <dbReference type="NCBI Taxonomy" id="351745"/>
    <lineage>
        <taxon>Bacteria</taxon>
        <taxon>Pseudomonadati</taxon>
        <taxon>Pseudomonadota</taxon>
        <taxon>Gammaproteobacteria</taxon>
        <taxon>Alteromonadales</taxon>
        <taxon>Shewanellaceae</taxon>
        <taxon>Shewanella</taxon>
    </lineage>
</organism>
<keyword id="KW-0004">4Fe-4S</keyword>
<keyword id="KW-0408">Iron</keyword>
<keyword id="KW-0411">Iron-sulfur</keyword>
<keyword id="KW-0479">Metal-binding</keyword>
<dbReference type="EMBL" id="CP000503">
    <property type="protein sequence ID" value="ABM22972.1"/>
    <property type="molecule type" value="Genomic_DNA"/>
</dbReference>
<dbReference type="RefSeq" id="WP_011787539.1">
    <property type="nucleotide sequence ID" value="NC_008750.1"/>
</dbReference>
<dbReference type="SMR" id="A1RE77"/>
<dbReference type="GeneID" id="67441716"/>
<dbReference type="KEGG" id="shw:Sputw3181_0119"/>
<dbReference type="HOGENOM" id="CLU_094569_0_0_6"/>
<dbReference type="Proteomes" id="UP000002597">
    <property type="component" value="Chromosome"/>
</dbReference>
<dbReference type="GO" id="GO:0051539">
    <property type="term" value="F:4 iron, 4 sulfur cluster binding"/>
    <property type="evidence" value="ECO:0007669"/>
    <property type="project" value="UniProtKB-UniRule"/>
</dbReference>
<dbReference type="GO" id="GO:0005506">
    <property type="term" value="F:iron ion binding"/>
    <property type="evidence" value="ECO:0007669"/>
    <property type="project" value="InterPro"/>
</dbReference>
<dbReference type="GO" id="GO:0016226">
    <property type="term" value="P:iron-sulfur cluster assembly"/>
    <property type="evidence" value="ECO:0007669"/>
    <property type="project" value="UniProtKB-UniRule"/>
</dbReference>
<dbReference type="GO" id="GO:0051604">
    <property type="term" value="P:protein maturation"/>
    <property type="evidence" value="ECO:0007669"/>
    <property type="project" value="UniProtKB-UniRule"/>
</dbReference>
<dbReference type="Gene3D" id="3.30.300.130">
    <property type="entry name" value="Fe-S cluster assembly (FSCA)"/>
    <property type="match status" value="1"/>
</dbReference>
<dbReference type="Gene3D" id="2.60.300.12">
    <property type="entry name" value="HesB-like domain"/>
    <property type="match status" value="1"/>
</dbReference>
<dbReference type="HAMAP" id="MF_01637">
    <property type="entry name" value="Fe_S_biogen_NfuA"/>
    <property type="match status" value="1"/>
</dbReference>
<dbReference type="InterPro" id="IPR017726">
    <property type="entry name" value="Fe/S_biogenesis_protein_NfuA"/>
</dbReference>
<dbReference type="InterPro" id="IPR000361">
    <property type="entry name" value="FeS_biogenesis"/>
</dbReference>
<dbReference type="InterPro" id="IPR034904">
    <property type="entry name" value="FSCA_dom_sf"/>
</dbReference>
<dbReference type="InterPro" id="IPR035903">
    <property type="entry name" value="HesB-like_dom_sf"/>
</dbReference>
<dbReference type="InterPro" id="IPR001075">
    <property type="entry name" value="NIF_FeS_clus_asmbl_NifU_C"/>
</dbReference>
<dbReference type="NCBIfam" id="NF008392">
    <property type="entry name" value="PRK11190.1"/>
    <property type="match status" value="1"/>
</dbReference>
<dbReference type="NCBIfam" id="TIGR03341">
    <property type="entry name" value="YhgI_GntY"/>
    <property type="match status" value="1"/>
</dbReference>
<dbReference type="PANTHER" id="PTHR11178:SF51">
    <property type="entry name" value="FE_S BIOGENESIS PROTEIN NFUA"/>
    <property type="match status" value="1"/>
</dbReference>
<dbReference type="PANTHER" id="PTHR11178">
    <property type="entry name" value="IRON-SULFUR CLUSTER SCAFFOLD PROTEIN NFU-RELATED"/>
    <property type="match status" value="1"/>
</dbReference>
<dbReference type="Pfam" id="PF01521">
    <property type="entry name" value="Fe-S_biosyn"/>
    <property type="match status" value="1"/>
</dbReference>
<dbReference type="Pfam" id="PF01106">
    <property type="entry name" value="NifU"/>
    <property type="match status" value="1"/>
</dbReference>
<dbReference type="SUPFAM" id="SSF117916">
    <property type="entry name" value="Fe-S cluster assembly (FSCA) domain-like"/>
    <property type="match status" value="1"/>
</dbReference>
<dbReference type="SUPFAM" id="SSF89360">
    <property type="entry name" value="HesB-like domain"/>
    <property type="match status" value="1"/>
</dbReference>
<accession>A1RE77</accession>
<gene>
    <name evidence="1" type="primary">nfuA</name>
    <name type="ordered locus">Sputw3181_0119</name>
</gene>
<feature type="chain" id="PRO_0000292094" description="Fe/S biogenesis protein NfuA">
    <location>
        <begin position="1"/>
        <end position="192"/>
    </location>
</feature>
<feature type="binding site" evidence="1">
    <location>
        <position position="149"/>
    </location>
    <ligand>
        <name>[4Fe-4S] cluster</name>
        <dbReference type="ChEBI" id="CHEBI:49883"/>
    </ligand>
</feature>
<feature type="binding site" evidence="1">
    <location>
        <position position="152"/>
    </location>
    <ligand>
        <name>[4Fe-4S] cluster</name>
        <dbReference type="ChEBI" id="CHEBI:49883"/>
    </ligand>
</feature>
<comment type="function">
    <text evidence="1">Involved in iron-sulfur cluster biogenesis. Binds a 4Fe-4S cluster, can transfer this cluster to apoproteins, and thereby intervenes in the maturation of Fe/S proteins. Could also act as a scaffold/chaperone for damaged Fe/S proteins.</text>
</comment>
<comment type="cofactor">
    <cofactor evidence="1">
        <name>[4Fe-4S] cluster</name>
        <dbReference type="ChEBI" id="CHEBI:49883"/>
    </cofactor>
    <text evidence="1">Binds 1 [4Fe-4S] cluster per subunit. The cluster is presumably bound at the interface of two monomers.</text>
</comment>
<comment type="subunit">
    <text evidence="1">Homodimer.</text>
</comment>
<comment type="similarity">
    <text evidence="1">Belongs to the NfuA family.</text>
</comment>
<protein>
    <recommendedName>
        <fullName evidence="1">Fe/S biogenesis protein NfuA</fullName>
    </recommendedName>
</protein>
<evidence type="ECO:0000255" key="1">
    <source>
        <dbReference type="HAMAP-Rule" id="MF_01637"/>
    </source>
</evidence>
<name>NFUA_SHESW</name>
<sequence length="192" mass="20661">MITISDAAQAHFVKLLADQPEGTHIRVFVISPGTAQAECGVSYCPPDAVESDDIELEFNGFNAMVDEKSAPFLEEATIDFVTDQLGSQLTLKAPNAKMRKVSGDAPLVERIEYVIQSEINPQLASHGGNIMLVEITSEGVAVLQFGGGCNGCSQVDITLKDGIEKQLLDMFPGELTGVRDVTDHQHGEHSYA</sequence>
<proteinExistence type="inferred from homology"/>